<accession>Q9P6P6</accession>
<feature type="transit peptide" description="Mitochondrion">
    <location>
        <begin position="1"/>
        <end position="15"/>
    </location>
</feature>
<feature type="chain" id="PRO_0000317088" description="Large ribosomal subunit protein uL3m">
    <location>
        <begin position="16"/>
        <end position="259"/>
    </location>
</feature>
<feature type="region of interest" description="Disordered" evidence="2">
    <location>
        <begin position="176"/>
        <end position="208"/>
    </location>
</feature>
<feature type="compositionally biased region" description="Polar residues" evidence="2">
    <location>
        <begin position="176"/>
        <end position="197"/>
    </location>
</feature>
<name>RM09_SCHPO</name>
<proteinExistence type="inferred from homology"/>
<gene>
    <name type="primary">mrpl9</name>
    <name type="ORF">SPAC644.17c</name>
</gene>
<dbReference type="EMBL" id="CU329670">
    <property type="protein sequence ID" value="CAB90144.1"/>
    <property type="molecule type" value="Genomic_DNA"/>
</dbReference>
<dbReference type="RefSeq" id="NP_593885.1">
    <property type="nucleotide sequence ID" value="NM_001019315.2"/>
</dbReference>
<dbReference type="SMR" id="Q9P6P6"/>
<dbReference type="BioGRID" id="279808">
    <property type="interactions" value="4"/>
</dbReference>
<dbReference type="ComplexPortal" id="CPX-10323">
    <property type="entry name" value="54S mitochondrial large ribosomal subunit"/>
</dbReference>
<dbReference type="FunCoup" id="Q9P6P6">
    <property type="interactions" value="455"/>
</dbReference>
<dbReference type="STRING" id="284812.Q9P6P6"/>
<dbReference type="PaxDb" id="4896-SPAC644.17c.1"/>
<dbReference type="EnsemblFungi" id="SPAC644.17c.1">
    <property type="protein sequence ID" value="SPAC644.17c.1:pep"/>
    <property type="gene ID" value="SPAC644.17c"/>
</dbReference>
<dbReference type="GeneID" id="2543386"/>
<dbReference type="KEGG" id="spo:2543386"/>
<dbReference type="PomBase" id="SPAC644.17c">
    <property type="gene designation" value="mrpl9"/>
</dbReference>
<dbReference type="VEuPathDB" id="FungiDB:SPAC644.17c"/>
<dbReference type="eggNOG" id="KOG3141">
    <property type="taxonomic scope" value="Eukaryota"/>
</dbReference>
<dbReference type="HOGENOM" id="CLU_044142_4_1_1"/>
<dbReference type="InParanoid" id="Q9P6P6"/>
<dbReference type="OMA" id="GKNIPCT"/>
<dbReference type="PhylomeDB" id="Q9P6P6"/>
<dbReference type="PRO" id="PR:Q9P6P6"/>
<dbReference type="Proteomes" id="UP000002485">
    <property type="component" value="Chromosome I"/>
</dbReference>
<dbReference type="GO" id="GO:0005737">
    <property type="term" value="C:cytoplasm"/>
    <property type="evidence" value="ECO:0007005"/>
    <property type="project" value="PomBase"/>
</dbReference>
<dbReference type="GO" id="GO:0005762">
    <property type="term" value="C:mitochondrial large ribosomal subunit"/>
    <property type="evidence" value="ECO:0000318"/>
    <property type="project" value="GO_Central"/>
</dbReference>
<dbReference type="GO" id="GO:0003735">
    <property type="term" value="F:structural constituent of ribosome"/>
    <property type="evidence" value="ECO:0000318"/>
    <property type="project" value="GO_Central"/>
</dbReference>
<dbReference type="GO" id="GO:0032543">
    <property type="term" value="P:mitochondrial translation"/>
    <property type="evidence" value="ECO:0000250"/>
    <property type="project" value="PomBase"/>
</dbReference>
<dbReference type="FunFam" id="2.40.30.10:FF:000004">
    <property type="entry name" value="50S ribosomal protein L3"/>
    <property type="match status" value="1"/>
</dbReference>
<dbReference type="FunFam" id="3.30.160.810:FF:000001">
    <property type="entry name" value="50S ribosomal protein L3"/>
    <property type="match status" value="1"/>
</dbReference>
<dbReference type="Gene3D" id="3.30.160.810">
    <property type="match status" value="1"/>
</dbReference>
<dbReference type="Gene3D" id="2.40.30.10">
    <property type="entry name" value="Translation factors"/>
    <property type="match status" value="1"/>
</dbReference>
<dbReference type="HAMAP" id="MF_01325_B">
    <property type="entry name" value="Ribosomal_uL3_B"/>
    <property type="match status" value="1"/>
</dbReference>
<dbReference type="InterPro" id="IPR000597">
    <property type="entry name" value="Ribosomal_uL3"/>
</dbReference>
<dbReference type="InterPro" id="IPR019927">
    <property type="entry name" value="Ribosomal_uL3_bac/org-type"/>
</dbReference>
<dbReference type="InterPro" id="IPR019926">
    <property type="entry name" value="Ribosomal_uL3_CS"/>
</dbReference>
<dbReference type="InterPro" id="IPR009000">
    <property type="entry name" value="Transl_B-barrel_sf"/>
</dbReference>
<dbReference type="NCBIfam" id="TIGR03625">
    <property type="entry name" value="L3_bact"/>
    <property type="match status" value="1"/>
</dbReference>
<dbReference type="PANTHER" id="PTHR11229">
    <property type="entry name" value="50S RIBOSOMAL PROTEIN L3"/>
    <property type="match status" value="1"/>
</dbReference>
<dbReference type="PANTHER" id="PTHR11229:SF8">
    <property type="entry name" value="LARGE RIBOSOMAL SUBUNIT PROTEIN UL3M"/>
    <property type="match status" value="1"/>
</dbReference>
<dbReference type="Pfam" id="PF00297">
    <property type="entry name" value="Ribosomal_L3"/>
    <property type="match status" value="1"/>
</dbReference>
<dbReference type="SUPFAM" id="SSF50447">
    <property type="entry name" value="Translation proteins"/>
    <property type="match status" value="1"/>
</dbReference>
<dbReference type="PROSITE" id="PS00474">
    <property type="entry name" value="RIBOSOMAL_L3"/>
    <property type="match status" value="1"/>
</dbReference>
<keyword id="KW-0963">Cytoplasm</keyword>
<keyword id="KW-0496">Mitochondrion</keyword>
<keyword id="KW-1185">Reference proteome</keyword>
<keyword id="KW-0687">Ribonucleoprotein</keyword>
<keyword id="KW-0689">Ribosomal protein</keyword>
<keyword id="KW-0809">Transit peptide</keyword>
<evidence type="ECO:0000250" key="1">
    <source>
        <dbReference type="UniProtKB" id="P31334"/>
    </source>
</evidence>
<evidence type="ECO:0000256" key="2">
    <source>
        <dbReference type="SAM" id="MobiDB-lite"/>
    </source>
</evidence>
<evidence type="ECO:0000269" key="3">
    <source>
    </source>
</evidence>
<evidence type="ECO:0000305" key="4"/>
<reference key="1">
    <citation type="journal article" date="2002" name="Nature">
        <title>The genome sequence of Schizosaccharomyces pombe.</title>
        <authorList>
            <person name="Wood V."/>
            <person name="Gwilliam R."/>
            <person name="Rajandream M.A."/>
            <person name="Lyne M.H."/>
            <person name="Lyne R."/>
            <person name="Stewart A."/>
            <person name="Sgouros J.G."/>
            <person name="Peat N."/>
            <person name="Hayles J."/>
            <person name="Baker S.G."/>
            <person name="Basham D."/>
            <person name="Bowman S."/>
            <person name="Brooks K."/>
            <person name="Brown D."/>
            <person name="Brown S."/>
            <person name="Chillingworth T."/>
            <person name="Churcher C.M."/>
            <person name="Collins M."/>
            <person name="Connor R."/>
            <person name="Cronin A."/>
            <person name="Davis P."/>
            <person name="Feltwell T."/>
            <person name="Fraser A."/>
            <person name="Gentles S."/>
            <person name="Goble A."/>
            <person name="Hamlin N."/>
            <person name="Harris D.E."/>
            <person name="Hidalgo J."/>
            <person name="Hodgson G."/>
            <person name="Holroyd S."/>
            <person name="Hornsby T."/>
            <person name="Howarth S."/>
            <person name="Huckle E.J."/>
            <person name="Hunt S."/>
            <person name="Jagels K."/>
            <person name="James K.D."/>
            <person name="Jones L."/>
            <person name="Jones M."/>
            <person name="Leather S."/>
            <person name="McDonald S."/>
            <person name="McLean J."/>
            <person name="Mooney P."/>
            <person name="Moule S."/>
            <person name="Mungall K.L."/>
            <person name="Murphy L.D."/>
            <person name="Niblett D."/>
            <person name="Odell C."/>
            <person name="Oliver K."/>
            <person name="O'Neil S."/>
            <person name="Pearson D."/>
            <person name="Quail M.A."/>
            <person name="Rabbinowitsch E."/>
            <person name="Rutherford K.M."/>
            <person name="Rutter S."/>
            <person name="Saunders D."/>
            <person name="Seeger K."/>
            <person name="Sharp S."/>
            <person name="Skelton J."/>
            <person name="Simmonds M.N."/>
            <person name="Squares R."/>
            <person name="Squares S."/>
            <person name="Stevens K."/>
            <person name="Taylor K."/>
            <person name="Taylor R.G."/>
            <person name="Tivey A."/>
            <person name="Walsh S.V."/>
            <person name="Warren T."/>
            <person name="Whitehead S."/>
            <person name="Woodward J.R."/>
            <person name="Volckaert G."/>
            <person name="Aert R."/>
            <person name="Robben J."/>
            <person name="Grymonprez B."/>
            <person name="Weltjens I."/>
            <person name="Vanstreels E."/>
            <person name="Rieger M."/>
            <person name="Schaefer M."/>
            <person name="Mueller-Auer S."/>
            <person name="Gabel C."/>
            <person name="Fuchs M."/>
            <person name="Duesterhoeft A."/>
            <person name="Fritzc C."/>
            <person name="Holzer E."/>
            <person name="Moestl D."/>
            <person name="Hilbert H."/>
            <person name="Borzym K."/>
            <person name="Langer I."/>
            <person name="Beck A."/>
            <person name="Lehrach H."/>
            <person name="Reinhardt R."/>
            <person name="Pohl T.M."/>
            <person name="Eger P."/>
            <person name="Zimmermann W."/>
            <person name="Wedler H."/>
            <person name="Wambutt R."/>
            <person name="Purnelle B."/>
            <person name="Goffeau A."/>
            <person name="Cadieu E."/>
            <person name="Dreano S."/>
            <person name="Gloux S."/>
            <person name="Lelaure V."/>
            <person name="Mottier S."/>
            <person name="Galibert F."/>
            <person name="Aves S.J."/>
            <person name="Xiang Z."/>
            <person name="Hunt C."/>
            <person name="Moore K."/>
            <person name="Hurst S.M."/>
            <person name="Lucas M."/>
            <person name="Rochet M."/>
            <person name="Gaillardin C."/>
            <person name="Tallada V.A."/>
            <person name="Garzon A."/>
            <person name="Thode G."/>
            <person name="Daga R.R."/>
            <person name="Cruzado L."/>
            <person name="Jimenez J."/>
            <person name="Sanchez M."/>
            <person name="del Rey F."/>
            <person name="Benito J."/>
            <person name="Dominguez A."/>
            <person name="Revuelta J.L."/>
            <person name="Moreno S."/>
            <person name="Armstrong J."/>
            <person name="Forsburg S.L."/>
            <person name="Cerutti L."/>
            <person name="Lowe T."/>
            <person name="McCombie W.R."/>
            <person name="Paulsen I."/>
            <person name="Potashkin J."/>
            <person name="Shpakovski G.V."/>
            <person name="Ussery D."/>
            <person name="Barrell B.G."/>
            <person name="Nurse P."/>
        </authorList>
    </citation>
    <scope>NUCLEOTIDE SEQUENCE [LARGE SCALE GENOMIC DNA]</scope>
    <source>
        <strain>972 / ATCC 24843</strain>
    </source>
</reference>
<reference key="2">
    <citation type="journal article" date="2006" name="Nat. Biotechnol.">
        <title>ORFeome cloning and global analysis of protein localization in the fission yeast Schizosaccharomyces pombe.</title>
        <authorList>
            <person name="Matsuyama A."/>
            <person name="Arai R."/>
            <person name="Yashiroda Y."/>
            <person name="Shirai A."/>
            <person name="Kamata A."/>
            <person name="Sekido S."/>
            <person name="Kobayashi Y."/>
            <person name="Hashimoto A."/>
            <person name="Hamamoto M."/>
            <person name="Hiraoka Y."/>
            <person name="Horinouchi S."/>
            <person name="Yoshida M."/>
        </authorList>
    </citation>
    <scope>SUBCELLULAR LOCATION [LARGE SCALE ANALYSIS]</scope>
</reference>
<protein>
    <recommendedName>
        <fullName evidence="4">Large ribosomal subunit protein uL3m</fullName>
    </recommendedName>
    <alternativeName>
        <fullName>54S ribosomal protein L9, mitochondrial</fullName>
    </alternativeName>
</protein>
<sequence length="259" mass="28567">MQSRFLISPTLIRTFAHHANLTPRKILHDLPEAAHARKQIPLRPGVILVKKGMTNAWDEKTGMQVPLTILQFDRVQAIDVRTKEKHGYYAVQVGSGIRKPKSITKAEQGNFFSHNIYPKMHVREFRVRDASGLVSPGTIFTTDYFKPKQYVDVKGITKGKGFAGVMKRWGFSGGNASHGASLSHRTPGSTGQNTTPSRVLPGRKMAGHMGHRSRTVKNLLVWAVDADLECILVKGSIPGPNKSAVYVTDTINRSTSATN</sequence>
<organism>
    <name type="scientific">Schizosaccharomyces pombe (strain 972 / ATCC 24843)</name>
    <name type="common">Fission yeast</name>
    <dbReference type="NCBI Taxonomy" id="284812"/>
    <lineage>
        <taxon>Eukaryota</taxon>
        <taxon>Fungi</taxon>
        <taxon>Dikarya</taxon>
        <taxon>Ascomycota</taxon>
        <taxon>Taphrinomycotina</taxon>
        <taxon>Schizosaccharomycetes</taxon>
        <taxon>Schizosaccharomycetales</taxon>
        <taxon>Schizosaccharomycetaceae</taxon>
        <taxon>Schizosaccharomyces</taxon>
    </lineage>
</organism>
<comment type="function">
    <text evidence="1">Component of the mitochondrial ribosome (mitoribosome), a dedicated translation machinery responsible for the synthesis of mitochondrial genome-encoded proteins, including at least some of the essential transmembrane subunits of the mitochondrial respiratory chain. The mitoribosomes are attached to the mitochondrial inner membrane and translation products are cotranslationally integrated into the membrane.</text>
</comment>
<comment type="subunit">
    <text evidence="1">Component of the mitochondrial large ribosomal subunit (mt-LSU). Mature yeast 74S mitochondrial ribosomes consist of a small (37S) and a large (54S) subunit. The 37S small subunit contains a 15S ribosomal RNA (15S mt-rRNA) and at least 32 different proteins. The 54S large subunit contains a 21S rRNA (21S mt-rRNA) and at least 45 different proteins.</text>
</comment>
<comment type="subcellular location">
    <subcellularLocation>
        <location evidence="3">Cytoplasm</location>
    </subcellularLocation>
    <subcellularLocation>
        <location evidence="1">Mitochondrion</location>
    </subcellularLocation>
</comment>
<comment type="similarity">
    <text evidence="4">Belongs to the universal ribosomal protein uL3 family.</text>
</comment>